<sequence length="40" mass="4115">SDPKIGNGCFGFPIDRIGSVSGLGCNRLVQNPPKPISGES</sequence>
<dbReference type="EMBL" id="DQ116725">
    <property type="protein sequence ID" value="AAZ82820.1"/>
    <property type="molecule type" value="mRNA"/>
</dbReference>
<dbReference type="GO" id="GO:0005576">
    <property type="term" value="C:extracellular region"/>
    <property type="evidence" value="ECO:0007669"/>
    <property type="project" value="UniProtKB-SubCell"/>
</dbReference>
<dbReference type="GO" id="GO:0005179">
    <property type="term" value="F:hormone activity"/>
    <property type="evidence" value="ECO:0007669"/>
    <property type="project" value="InterPro"/>
</dbReference>
<dbReference type="GO" id="GO:0090729">
    <property type="term" value="F:toxin activity"/>
    <property type="evidence" value="ECO:0007669"/>
    <property type="project" value="UniProtKB-KW"/>
</dbReference>
<dbReference type="GO" id="GO:0008217">
    <property type="term" value="P:regulation of blood pressure"/>
    <property type="evidence" value="ECO:0007669"/>
    <property type="project" value="UniProtKB-KW"/>
</dbReference>
<dbReference type="GO" id="GO:0042311">
    <property type="term" value="P:vasodilation"/>
    <property type="evidence" value="ECO:0007669"/>
    <property type="project" value="UniProtKB-KW"/>
</dbReference>
<dbReference type="InterPro" id="IPR000663">
    <property type="entry name" value="Natr_peptide"/>
</dbReference>
<dbReference type="InterPro" id="IPR030480">
    <property type="entry name" value="Natr_peptide_CS"/>
</dbReference>
<dbReference type="InterPro" id="IPR002408">
    <property type="entry name" value="Natriuretic_peptide_brain"/>
</dbReference>
<dbReference type="Pfam" id="PF00212">
    <property type="entry name" value="ANP"/>
    <property type="match status" value="1"/>
</dbReference>
<dbReference type="PRINTS" id="PR00712">
    <property type="entry name" value="BNATPEPTIDE"/>
</dbReference>
<dbReference type="SMART" id="SM00183">
    <property type="entry name" value="NAT_PEP"/>
    <property type="match status" value="1"/>
</dbReference>
<dbReference type="PROSITE" id="PS00263">
    <property type="entry name" value="NATRIURETIC_PEPTIDE"/>
    <property type="match status" value="1"/>
</dbReference>
<evidence type="ECO:0000250" key="1">
    <source>
        <dbReference type="UniProtKB" id="C6EVG7"/>
    </source>
</evidence>
<evidence type="ECO:0000250" key="2">
    <source>
        <dbReference type="UniProtKB" id="P83231"/>
    </source>
</evidence>
<evidence type="ECO:0000250" key="3">
    <source>
        <dbReference type="UniProtKB" id="Q3SAE9"/>
    </source>
</evidence>
<evidence type="ECO:0000303" key="4">
    <source>
    </source>
</evidence>
<evidence type="ECO:0000305" key="5"/>
<evidence type="ECO:0000305" key="6">
    <source>
    </source>
</evidence>
<organism>
    <name type="scientific">Pseudechis australis</name>
    <name type="common">Mulga snake</name>
    <name type="synonym">King brown snake</name>
    <dbReference type="NCBI Taxonomy" id="8670"/>
    <lineage>
        <taxon>Eukaryota</taxon>
        <taxon>Metazoa</taxon>
        <taxon>Chordata</taxon>
        <taxon>Craniata</taxon>
        <taxon>Vertebrata</taxon>
        <taxon>Euteleostomi</taxon>
        <taxon>Lepidosauria</taxon>
        <taxon>Squamata</taxon>
        <taxon>Bifurcata</taxon>
        <taxon>Unidentata</taxon>
        <taxon>Episquamata</taxon>
        <taxon>Toxicofera</taxon>
        <taxon>Serpentes</taxon>
        <taxon>Colubroidea</taxon>
        <taxon>Elapidae</taxon>
        <taxon>Hydrophiinae</taxon>
        <taxon>Pseudechis</taxon>
    </lineage>
</organism>
<comment type="function">
    <text evidence="1 3">Snake venom natriuretic peptide that targets both NPR1 and NPR2 (By similarity). Exhibits hypotensive and vasodepressor activities (By similarity).</text>
</comment>
<comment type="subcellular location">
    <subcellularLocation>
        <location evidence="6">Secreted</location>
    </subcellularLocation>
</comment>
<comment type="tissue specificity">
    <text evidence="6">Expressed by the venom gland.</text>
</comment>
<comment type="similarity">
    <text evidence="5">Belongs to the natriuretic peptide family.</text>
</comment>
<keyword id="KW-1015">Disulfide bond</keyword>
<keyword id="KW-0382">Hypotensive agent</keyword>
<keyword id="KW-0964">Secreted</keyword>
<keyword id="KW-0800">Toxin</keyword>
<keyword id="KW-0838">Vasoactive</keyword>
<keyword id="KW-0840">Vasodilator</keyword>
<name>VNPA_PSEAU</name>
<protein>
    <recommendedName>
        <fullName evidence="4">Natriuretic peptide PaNP-a</fullName>
    </recommendedName>
</protein>
<accession>Q3SAF5</accession>
<feature type="peptide" id="PRO_5000140403" description="Natriuretic peptide PaNP-a" evidence="2">
    <location>
        <begin position="1" status="less than"/>
        <end position="40"/>
    </location>
</feature>
<feature type="disulfide bond" evidence="2">
    <location>
        <begin position="9"/>
        <end position="25"/>
    </location>
</feature>
<feature type="non-terminal residue">
    <location>
        <position position="1"/>
    </location>
</feature>
<proteinExistence type="evidence at transcript level"/>
<reference key="1">
    <citation type="journal article" date="2006" name="Biochimie">
        <title>Cloning and characterisation of natriuretic peptides from the venom glands of Australian elapids.</title>
        <authorList>
            <person name="St Pierre L."/>
            <person name="Flight S."/>
            <person name="Masci P.P."/>
            <person name="Hanchard K.J."/>
            <person name="Lewis R.J."/>
            <person name="Alewood P.F."/>
            <person name="de Jersey J."/>
            <person name="Lavin M.F."/>
        </authorList>
    </citation>
    <scope>NUCLEOTIDE SEQUENCE [MRNA]</scope>
    <source>
        <tissue>Venom gland</tissue>
    </source>
</reference>